<organism>
    <name type="scientific">Methanococcus maripaludis (strain C5 / ATCC BAA-1333)</name>
    <dbReference type="NCBI Taxonomy" id="402880"/>
    <lineage>
        <taxon>Archaea</taxon>
        <taxon>Methanobacteriati</taxon>
        <taxon>Methanobacteriota</taxon>
        <taxon>Methanomada group</taxon>
        <taxon>Methanococci</taxon>
        <taxon>Methanococcales</taxon>
        <taxon>Methanococcaceae</taxon>
        <taxon>Methanococcus</taxon>
    </lineage>
</organism>
<name>RS8_METM5</name>
<feature type="chain" id="PRO_1000051786" description="Small ribosomal subunit protein uS8">
    <location>
        <begin position="1"/>
        <end position="130"/>
    </location>
</feature>
<accession>A4FWA6</accession>
<gene>
    <name evidence="1" type="primary">rps8</name>
    <name type="ordered locus">MmarC5_0164</name>
</gene>
<evidence type="ECO:0000255" key="1">
    <source>
        <dbReference type="HAMAP-Rule" id="MF_01302"/>
    </source>
</evidence>
<evidence type="ECO:0000305" key="2"/>
<proteinExistence type="inferred from homology"/>
<dbReference type="EMBL" id="CP000609">
    <property type="protein sequence ID" value="ABO34481.1"/>
    <property type="molecule type" value="Genomic_DNA"/>
</dbReference>
<dbReference type="RefSeq" id="WP_011171358.1">
    <property type="nucleotide sequence ID" value="NC_009135.1"/>
</dbReference>
<dbReference type="SMR" id="A4FWA6"/>
<dbReference type="STRING" id="402880.MmarC5_0164"/>
<dbReference type="GeneID" id="4928342"/>
<dbReference type="KEGG" id="mmq:MmarC5_0164"/>
<dbReference type="eggNOG" id="arCOG04091">
    <property type="taxonomic scope" value="Archaea"/>
</dbReference>
<dbReference type="HOGENOM" id="CLU_098428_1_1_2"/>
<dbReference type="OrthoDB" id="5670at2157"/>
<dbReference type="Proteomes" id="UP000000253">
    <property type="component" value="Chromosome"/>
</dbReference>
<dbReference type="GO" id="GO:1990904">
    <property type="term" value="C:ribonucleoprotein complex"/>
    <property type="evidence" value="ECO:0007669"/>
    <property type="project" value="UniProtKB-KW"/>
</dbReference>
<dbReference type="GO" id="GO:0005840">
    <property type="term" value="C:ribosome"/>
    <property type="evidence" value="ECO:0007669"/>
    <property type="project" value="UniProtKB-KW"/>
</dbReference>
<dbReference type="GO" id="GO:0019843">
    <property type="term" value="F:rRNA binding"/>
    <property type="evidence" value="ECO:0007669"/>
    <property type="project" value="UniProtKB-UniRule"/>
</dbReference>
<dbReference type="GO" id="GO:0003735">
    <property type="term" value="F:structural constituent of ribosome"/>
    <property type="evidence" value="ECO:0007669"/>
    <property type="project" value="InterPro"/>
</dbReference>
<dbReference type="GO" id="GO:0006412">
    <property type="term" value="P:translation"/>
    <property type="evidence" value="ECO:0007669"/>
    <property type="project" value="UniProtKB-UniRule"/>
</dbReference>
<dbReference type="FunFam" id="3.30.1370.30:FF:000001">
    <property type="entry name" value="40S ribosomal protein S15a"/>
    <property type="match status" value="1"/>
</dbReference>
<dbReference type="Gene3D" id="3.30.1370.30">
    <property type="match status" value="1"/>
</dbReference>
<dbReference type="Gene3D" id="3.30.1490.10">
    <property type="match status" value="1"/>
</dbReference>
<dbReference type="HAMAP" id="MF_01302_A">
    <property type="entry name" value="Ribosomal_uS8_A"/>
    <property type="match status" value="1"/>
</dbReference>
<dbReference type="InterPro" id="IPR000630">
    <property type="entry name" value="Ribosomal_uS8"/>
</dbReference>
<dbReference type="InterPro" id="IPR047863">
    <property type="entry name" value="Ribosomal_uS8_CS"/>
</dbReference>
<dbReference type="InterPro" id="IPR035987">
    <property type="entry name" value="Ribosomal_uS8_sf"/>
</dbReference>
<dbReference type="NCBIfam" id="NF003115">
    <property type="entry name" value="PRK04034.1"/>
    <property type="match status" value="1"/>
</dbReference>
<dbReference type="PANTHER" id="PTHR11758">
    <property type="entry name" value="40S RIBOSOMAL PROTEIN S15A"/>
    <property type="match status" value="1"/>
</dbReference>
<dbReference type="Pfam" id="PF00410">
    <property type="entry name" value="Ribosomal_S8"/>
    <property type="match status" value="1"/>
</dbReference>
<dbReference type="SUPFAM" id="SSF56047">
    <property type="entry name" value="Ribosomal protein S8"/>
    <property type="match status" value="1"/>
</dbReference>
<dbReference type="PROSITE" id="PS00053">
    <property type="entry name" value="RIBOSOMAL_S8"/>
    <property type="match status" value="1"/>
</dbReference>
<reference key="1">
    <citation type="submission" date="2007-03" db="EMBL/GenBank/DDBJ databases">
        <title>Complete sequence of chromosome of Methanococcus maripaludis C5.</title>
        <authorList>
            <consortium name="US DOE Joint Genome Institute"/>
            <person name="Copeland A."/>
            <person name="Lucas S."/>
            <person name="Lapidus A."/>
            <person name="Barry K."/>
            <person name="Glavina del Rio T."/>
            <person name="Dalin E."/>
            <person name="Tice H."/>
            <person name="Pitluck S."/>
            <person name="Chertkov O."/>
            <person name="Brettin T."/>
            <person name="Bruce D."/>
            <person name="Han C."/>
            <person name="Detter J.C."/>
            <person name="Schmutz J."/>
            <person name="Larimer F."/>
            <person name="Land M."/>
            <person name="Hauser L."/>
            <person name="Kyrpides N."/>
            <person name="Mikhailova N."/>
            <person name="Sieprawska-Lupa M."/>
            <person name="Whitman W.B."/>
            <person name="Richardson P."/>
        </authorList>
    </citation>
    <scope>NUCLEOTIDE SEQUENCE [LARGE SCALE GENOMIC DNA]</scope>
    <source>
        <strain>C5 / ATCC BAA-1333</strain>
    </source>
</reference>
<keyword id="KW-0687">Ribonucleoprotein</keyword>
<keyword id="KW-0689">Ribosomal protein</keyword>
<keyword id="KW-0694">RNA-binding</keyword>
<keyword id="KW-0699">rRNA-binding</keyword>
<comment type="function">
    <text evidence="1">One of the primary rRNA binding proteins, it binds directly to 16S rRNA central domain where it helps coordinate assembly of the platform of the 30S subunit.</text>
</comment>
<comment type="subunit">
    <text evidence="1">Part of the 30S ribosomal subunit.</text>
</comment>
<comment type="similarity">
    <text evidence="1">Belongs to the universal ribosomal protein uS8 family.</text>
</comment>
<protein>
    <recommendedName>
        <fullName evidence="1">Small ribosomal subunit protein uS8</fullName>
    </recommendedName>
    <alternativeName>
        <fullName evidence="2">30S ribosomal protein S8</fullName>
    </alternativeName>
</protein>
<sequence length="130" mass="14324">MSLMDPLANALNHVSNCESVGKNVAYLKPASKLIGRVLNVMQDQGYIGNFEYIEDGKAGVYKVDLIGQINKCGAVKPRYAVKNHDFEKFEKRYLPAKGFGLLIVSTPKGLMTHDEARNAGVGGRLISYIY</sequence>